<name>RS16_SHIDS</name>
<feature type="chain" id="PRO_0000243870" description="Small ribosomal subunit protein bS16">
    <location>
        <begin position="1"/>
        <end position="82"/>
    </location>
</feature>
<protein>
    <recommendedName>
        <fullName evidence="1">Small ribosomal subunit protein bS16</fullName>
    </recommendedName>
    <alternativeName>
        <fullName evidence="2">30S ribosomal protein S16</fullName>
    </alternativeName>
</protein>
<reference key="1">
    <citation type="journal article" date="2005" name="Nucleic Acids Res.">
        <title>Genome dynamics and diversity of Shigella species, the etiologic agents of bacillary dysentery.</title>
        <authorList>
            <person name="Yang F."/>
            <person name="Yang J."/>
            <person name="Zhang X."/>
            <person name="Chen L."/>
            <person name="Jiang Y."/>
            <person name="Yan Y."/>
            <person name="Tang X."/>
            <person name="Wang J."/>
            <person name="Xiong Z."/>
            <person name="Dong J."/>
            <person name="Xue Y."/>
            <person name="Zhu Y."/>
            <person name="Xu X."/>
            <person name="Sun L."/>
            <person name="Chen S."/>
            <person name="Nie H."/>
            <person name="Peng J."/>
            <person name="Xu J."/>
            <person name="Wang Y."/>
            <person name="Yuan Z."/>
            <person name="Wen Y."/>
            <person name="Yao Z."/>
            <person name="Shen Y."/>
            <person name="Qiang B."/>
            <person name="Hou Y."/>
            <person name="Yu J."/>
            <person name="Jin Q."/>
        </authorList>
    </citation>
    <scope>NUCLEOTIDE SEQUENCE [LARGE SCALE GENOMIC DNA]</scope>
    <source>
        <strain>Sd197</strain>
    </source>
</reference>
<keyword id="KW-1185">Reference proteome</keyword>
<keyword id="KW-0687">Ribonucleoprotein</keyword>
<keyword id="KW-0689">Ribosomal protein</keyword>
<organism>
    <name type="scientific">Shigella dysenteriae serotype 1 (strain Sd197)</name>
    <dbReference type="NCBI Taxonomy" id="300267"/>
    <lineage>
        <taxon>Bacteria</taxon>
        <taxon>Pseudomonadati</taxon>
        <taxon>Pseudomonadota</taxon>
        <taxon>Gammaproteobacteria</taxon>
        <taxon>Enterobacterales</taxon>
        <taxon>Enterobacteriaceae</taxon>
        <taxon>Shigella</taxon>
    </lineage>
</organism>
<sequence>MVTIRLARHGAKKRPFYQVVVADSRNARNGRFIERVGFFNPIASEKEEGTRLDLDRIAHWVGQGATISDRVAALIKEVNKAA</sequence>
<proteinExistence type="inferred from homology"/>
<evidence type="ECO:0000255" key="1">
    <source>
        <dbReference type="HAMAP-Rule" id="MF_00385"/>
    </source>
</evidence>
<evidence type="ECO:0000305" key="2"/>
<accession>Q32CX9</accession>
<dbReference type="EMBL" id="CP000034">
    <property type="protein sequence ID" value="ABB62826.1"/>
    <property type="molecule type" value="Genomic_DNA"/>
</dbReference>
<dbReference type="RefSeq" id="WP_000256450.1">
    <property type="nucleotide sequence ID" value="NC_007606.1"/>
</dbReference>
<dbReference type="RefSeq" id="YP_404317.1">
    <property type="nucleotide sequence ID" value="NC_007606.1"/>
</dbReference>
<dbReference type="SMR" id="Q32CX9"/>
<dbReference type="STRING" id="300267.SDY_2783"/>
<dbReference type="EnsemblBacteria" id="ABB62826">
    <property type="protein sequence ID" value="ABB62826"/>
    <property type="gene ID" value="SDY_2783"/>
</dbReference>
<dbReference type="GeneID" id="93774459"/>
<dbReference type="KEGG" id="sdy:SDY_2783"/>
<dbReference type="PATRIC" id="fig|300267.13.peg.3354"/>
<dbReference type="HOGENOM" id="CLU_100590_5_1_6"/>
<dbReference type="Proteomes" id="UP000002716">
    <property type="component" value="Chromosome"/>
</dbReference>
<dbReference type="GO" id="GO:0005737">
    <property type="term" value="C:cytoplasm"/>
    <property type="evidence" value="ECO:0007669"/>
    <property type="project" value="UniProtKB-ARBA"/>
</dbReference>
<dbReference type="GO" id="GO:0015935">
    <property type="term" value="C:small ribosomal subunit"/>
    <property type="evidence" value="ECO:0007669"/>
    <property type="project" value="TreeGrafter"/>
</dbReference>
<dbReference type="GO" id="GO:0003735">
    <property type="term" value="F:structural constituent of ribosome"/>
    <property type="evidence" value="ECO:0007669"/>
    <property type="project" value="InterPro"/>
</dbReference>
<dbReference type="GO" id="GO:0006412">
    <property type="term" value="P:translation"/>
    <property type="evidence" value="ECO:0007669"/>
    <property type="project" value="UniProtKB-UniRule"/>
</dbReference>
<dbReference type="FunFam" id="3.30.1320.10:FF:000001">
    <property type="entry name" value="30S ribosomal protein S16"/>
    <property type="match status" value="1"/>
</dbReference>
<dbReference type="Gene3D" id="3.30.1320.10">
    <property type="match status" value="1"/>
</dbReference>
<dbReference type="HAMAP" id="MF_00385">
    <property type="entry name" value="Ribosomal_bS16"/>
    <property type="match status" value="1"/>
</dbReference>
<dbReference type="InterPro" id="IPR000307">
    <property type="entry name" value="Ribosomal_bS16"/>
</dbReference>
<dbReference type="InterPro" id="IPR020592">
    <property type="entry name" value="Ribosomal_bS16_CS"/>
</dbReference>
<dbReference type="InterPro" id="IPR023803">
    <property type="entry name" value="Ribosomal_bS16_dom_sf"/>
</dbReference>
<dbReference type="NCBIfam" id="TIGR00002">
    <property type="entry name" value="S16"/>
    <property type="match status" value="1"/>
</dbReference>
<dbReference type="PANTHER" id="PTHR12919">
    <property type="entry name" value="30S RIBOSOMAL PROTEIN S16"/>
    <property type="match status" value="1"/>
</dbReference>
<dbReference type="PANTHER" id="PTHR12919:SF20">
    <property type="entry name" value="SMALL RIBOSOMAL SUBUNIT PROTEIN BS16M"/>
    <property type="match status" value="1"/>
</dbReference>
<dbReference type="Pfam" id="PF00886">
    <property type="entry name" value="Ribosomal_S16"/>
    <property type="match status" value="1"/>
</dbReference>
<dbReference type="SUPFAM" id="SSF54565">
    <property type="entry name" value="Ribosomal protein S16"/>
    <property type="match status" value="1"/>
</dbReference>
<dbReference type="PROSITE" id="PS00732">
    <property type="entry name" value="RIBOSOMAL_S16"/>
    <property type="match status" value="1"/>
</dbReference>
<comment type="similarity">
    <text evidence="1">Belongs to the bacterial ribosomal protein bS16 family.</text>
</comment>
<gene>
    <name evidence="1" type="primary">rpsP</name>
    <name type="ordered locus">SDY_2783</name>
</gene>